<accession>B7UHZ1</accession>
<keyword id="KW-0963">Cytoplasm</keyword>
<keyword id="KW-0479">Metal-binding</keyword>
<keyword id="KW-1185">Reference proteome</keyword>
<keyword id="KW-0862">Zinc</keyword>
<dbReference type="EMBL" id="FM180568">
    <property type="protein sequence ID" value="CAS10745.1"/>
    <property type="molecule type" value="Genomic_DNA"/>
</dbReference>
<dbReference type="RefSeq" id="WP_000858396.1">
    <property type="nucleotide sequence ID" value="NC_011601.1"/>
</dbReference>
<dbReference type="SMR" id="B7UHZ1"/>
<dbReference type="KEGG" id="ecg:E2348C_3197"/>
<dbReference type="HOGENOM" id="CLU_113336_0_1_6"/>
<dbReference type="Proteomes" id="UP000008205">
    <property type="component" value="Chromosome"/>
</dbReference>
<dbReference type="GO" id="GO:0005737">
    <property type="term" value="C:cytoplasm"/>
    <property type="evidence" value="ECO:0007669"/>
    <property type="project" value="UniProtKB-SubCell"/>
</dbReference>
<dbReference type="GO" id="GO:0008270">
    <property type="term" value="F:zinc ion binding"/>
    <property type="evidence" value="ECO:0007669"/>
    <property type="project" value="UniProtKB-UniRule"/>
</dbReference>
<dbReference type="GO" id="GO:0006950">
    <property type="term" value="P:response to stress"/>
    <property type="evidence" value="ECO:0007669"/>
    <property type="project" value="UniProtKB-ARBA"/>
</dbReference>
<dbReference type="Gene3D" id="3.30.2010.10">
    <property type="entry name" value="Metalloproteases ('zincins'), catalytic domain"/>
    <property type="match status" value="1"/>
</dbReference>
<dbReference type="HAMAP" id="MF_00746">
    <property type="entry name" value="SprT"/>
    <property type="match status" value="1"/>
</dbReference>
<dbReference type="InterPro" id="IPR006640">
    <property type="entry name" value="SprT-like_domain"/>
</dbReference>
<dbReference type="InterPro" id="IPR035240">
    <property type="entry name" value="SprT_Zn_ribbon"/>
</dbReference>
<dbReference type="InterPro" id="IPR023483">
    <property type="entry name" value="Uncharacterised_SprT"/>
</dbReference>
<dbReference type="NCBIfam" id="NF003421">
    <property type="entry name" value="PRK04860.1"/>
    <property type="match status" value="1"/>
</dbReference>
<dbReference type="PANTHER" id="PTHR38773">
    <property type="entry name" value="PROTEIN SPRT"/>
    <property type="match status" value="1"/>
</dbReference>
<dbReference type="PANTHER" id="PTHR38773:SF1">
    <property type="entry name" value="PROTEIN SPRT"/>
    <property type="match status" value="1"/>
</dbReference>
<dbReference type="Pfam" id="PF10263">
    <property type="entry name" value="SprT-like"/>
    <property type="match status" value="1"/>
</dbReference>
<dbReference type="Pfam" id="PF17283">
    <property type="entry name" value="Zn_ribbon_SprT"/>
    <property type="match status" value="1"/>
</dbReference>
<dbReference type="SMART" id="SM00731">
    <property type="entry name" value="SprT"/>
    <property type="match status" value="1"/>
</dbReference>
<dbReference type="PROSITE" id="PS00142">
    <property type="entry name" value="ZINC_PROTEASE"/>
    <property type="match status" value="1"/>
</dbReference>
<reference key="1">
    <citation type="journal article" date="2009" name="J. Bacteriol.">
        <title>Complete genome sequence and comparative genome analysis of enteropathogenic Escherichia coli O127:H6 strain E2348/69.</title>
        <authorList>
            <person name="Iguchi A."/>
            <person name="Thomson N.R."/>
            <person name="Ogura Y."/>
            <person name="Saunders D."/>
            <person name="Ooka T."/>
            <person name="Henderson I.R."/>
            <person name="Harris D."/>
            <person name="Asadulghani M."/>
            <person name="Kurokawa K."/>
            <person name="Dean P."/>
            <person name="Kenny B."/>
            <person name="Quail M.A."/>
            <person name="Thurston S."/>
            <person name="Dougan G."/>
            <person name="Hayashi T."/>
            <person name="Parkhill J."/>
            <person name="Frankel G."/>
        </authorList>
    </citation>
    <scope>NUCLEOTIDE SEQUENCE [LARGE SCALE GENOMIC DNA]</scope>
    <source>
        <strain>E2348/69 / EPEC</strain>
    </source>
</reference>
<feature type="chain" id="PRO_1000148331" description="Protein SprT">
    <location>
        <begin position="1"/>
        <end position="165"/>
    </location>
</feature>
<feature type="domain" description="SprT-like" evidence="1">
    <location>
        <begin position="20"/>
        <end position="163"/>
    </location>
</feature>
<feature type="active site" evidence="1">
    <location>
        <position position="79"/>
    </location>
</feature>
<feature type="binding site" evidence="1">
    <location>
        <position position="78"/>
    </location>
    <ligand>
        <name>Zn(2+)</name>
        <dbReference type="ChEBI" id="CHEBI:29105"/>
    </ligand>
</feature>
<feature type="binding site" evidence="1">
    <location>
        <position position="82"/>
    </location>
    <ligand>
        <name>Zn(2+)</name>
        <dbReference type="ChEBI" id="CHEBI:29105"/>
    </ligand>
</feature>
<evidence type="ECO:0000255" key="1">
    <source>
        <dbReference type="HAMAP-Rule" id="MF_00746"/>
    </source>
</evidence>
<proteinExistence type="inferred from homology"/>
<name>SPRT_ECO27</name>
<comment type="cofactor">
    <cofactor evidence="1">
        <name>Zn(2+)</name>
        <dbReference type="ChEBI" id="CHEBI:29105"/>
    </cofactor>
    <text evidence="1">Binds 1 zinc ion.</text>
</comment>
<comment type="subcellular location">
    <subcellularLocation>
        <location evidence="1">Cytoplasm</location>
    </subcellularLocation>
</comment>
<comment type="similarity">
    <text evidence="1">Belongs to the SprT family.</text>
</comment>
<gene>
    <name evidence="1" type="primary">sprT</name>
    <name type="ordered locus">E2348C_3197</name>
</gene>
<sequence>MKTSRLPIAIQQAVMRRLREKLAQANLKLGRNYPEPKLSYTQRGTSAGTAWLESYEIRLNPVLLLENSEAFIEEVVPHELAHLLVWKHFGRVAPHGKEWKWMMESVLGVPARRTHQFELQSVRRNTFPYRCKCQEHQLTVRRHNRVVRGEAVYRCVHCGEQLVAK</sequence>
<organism>
    <name type="scientific">Escherichia coli O127:H6 (strain E2348/69 / EPEC)</name>
    <dbReference type="NCBI Taxonomy" id="574521"/>
    <lineage>
        <taxon>Bacteria</taxon>
        <taxon>Pseudomonadati</taxon>
        <taxon>Pseudomonadota</taxon>
        <taxon>Gammaproteobacteria</taxon>
        <taxon>Enterobacterales</taxon>
        <taxon>Enterobacteriaceae</taxon>
        <taxon>Escherichia</taxon>
    </lineage>
</organism>
<protein>
    <recommendedName>
        <fullName evidence="1">Protein SprT</fullName>
    </recommendedName>
</protein>